<dbReference type="EMBL" id="AF057132">
    <property type="protein sequence ID" value="AAC33712.1"/>
    <property type="molecule type" value="Genomic_DNA"/>
</dbReference>
<dbReference type="RefSeq" id="YP_007625366.1">
    <property type="nucleotide sequence ID" value="NC_020646.1"/>
</dbReference>
<dbReference type="SMR" id="O78937"/>
<dbReference type="GeneID" id="14841921"/>
<dbReference type="CTD" id="4519"/>
<dbReference type="GO" id="GO:0005743">
    <property type="term" value="C:mitochondrial inner membrane"/>
    <property type="evidence" value="ECO:0007669"/>
    <property type="project" value="UniProtKB-SubCell"/>
</dbReference>
<dbReference type="GO" id="GO:0045275">
    <property type="term" value="C:respiratory chain complex III"/>
    <property type="evidence" value="ECO:0007669"/>
    <property type="project" value="InterPro"/>
</dbReference>
<dbReference type="GO" id="GO:0046872">
    <property type="term" value="F:metal ion binding"/>
    <property type="evidence" value="ECO:0007669"/>
    <property type="project" value="UniProtKB-KW"/>
</dbReference>
<dbReference type="GO" id="GO:0008121">
    <property type="term" value="F:ubiquinol-cytochrome-c reductase activity"/>
    <property type="evidence" value="ECO:0007669"/>
    <property type="project" value="InterPro"/>
</dbReference>
<dbReference type="GO" id="GO:0006122">
    <property type="term" value="P:mitochondrial electron transport, ubiquinol to cytochrome c"/>
    <property type="evidence" value="ECO:0007669"/>
    <property type="project" value="TreeGrafter"/>
</dbReference>
<dbReference type="CDD" id="cd00290">
    <property type="entry name" value="cytochrome_b_C"/>
    <property type="match status" value="1"/>
</dbReference>
<dbReference type="CDD" id="cd00284">
    <property type="entry name" value="Cytochrome_b_N"/>
    <property type="match status" value="1"/>
</dbReference>
<dbReference type="FunFam" id="1.20.810.10:FF:000002">
    <property type="entry name" value="Cytochrome b"/>
    <property type="match status" value="1"/>
</dbReference>
<dbReference type="Gene3D" id="1.20.810.10">
    <property type="entry name" value="Cytochrome Bc1 Complex, Chain C"/>
    <property type="match status" value="1"/>
</dbReference>
<dbReference type="InterPro" id="IPR005798">
    <property type="entry name" value="Cyt_b/b6_C"/>
</dbReference>
<dbReference type="InterPro" id="IPR036150">
    <property type="entry name" value="Cyt_b/b6_C_sf"/>
</dbReference>
<dbReference type="InterPro" id="IPR005797">
    <property type="entry name" value="Cyt_b/b6_N"/>
</dbReference>
<dbReference type="InterPro" id="IPR027387">
    <property type="entry name" value="Cytb/b6-like_sf"/>
</dbReference>
<dbReference type="InterPro" id="IPR030689">
    <property type="entry name" value="Cytochrome_b"/>
</dbReference>
<dbReference type="InterPro" id="IPR048260">
    <property type="entry name" value="Cytochrome_b_C_euk/bac"/>
</dbReference>
<dbReference type="InterPro" id="IPR048259">
    <property type="entry name" value="Cytochrome_b_N_euk/bac"/>
</dbReference>
<dbReference type="InterPro" id="IPR016174">
    <property type="entry name" value="Di-haem_cyt_TM"/>
</dbReference>
<dbReference type="PANTHER" id="PTHR19271">
    <property type="entry name" value="CYTOCHROME B"/>
    <property type="match status" value="1"/>
</dbReference>
<dbReference type="PANTHER" id="PTHR19271:SF16">
    <property type="entry name" value="CYTOCHROME B"/>
    <property type="match status" value="1"/>
</dbReference>
<dbReference type="Pfam" id="PF00032">
    <property type="entry name" value="Cytochrom_B_C"/>
    <property type="match status" value="1"/>
</dbReference>
<dbReference type="Pfam" id="PF00033">
    <property type="entry name" value="Cytochrome_B"/>
    <property type="match status" value="1"/>
</dbReference>
<dbReference type="PIRSF" id="PIRSF038885">
    <property type="entry name" value="COB"/>
    <property type="match status" value="1"/>
</dbReference>
<dbReference type="SUPFAM" id="SSF81648">
    <property type="entry name" value="a domain/subunit of cytochrome bc1 complex (Ubiquinol-cytochrome c reductase)"/>
    <property type="match status" value="1"/>
</dbReference>
<dbReference type="SUPFAM" id="SSF81342">
    <property type="entry name" value="Transmembrane di-heme cytochromes"/>
    <property type="match status" value="1"/>
</dbReference>
<dbReference type="PROSITE" id="PS51003">
    <property type="entry name" value="CYTB_CTER"/>
    <property type="match status" value="1"/>
</dbReference>
<dbReference type="PROSITE" id="PS51002">
    <property type="entry name" value="CYTB_NTER"/>
    <property type="match status" value="1"/>
</dbReference>
<organism>
    <name type="scientific">Taxidea taxus</name>
    <name type="common">American badger</name>
    <name type="synonym">Ursus taxus</name>
    <dbReference type="NCBI Taxonomy" id="30554"/>
    <lineage>
        <taxon>Eukaryota</taxon>
        <taxon>Metazoa</taxon>
        <taxon>Chordata</taxon>
        <taxon>Craniata</taxon>
        <taxon>Vertebrata</taxon>
        <taxon>Euteleostomi</taxon>
        <taxon>Mammalia</taxon>
        <taxon>Eutheria</taxon>
        <taxon>Laurasiatheria</taxon>
        <taxon>Carnivora</taxon>
        <taxon>Caniformia</taxon>
        <taxon>Musteloidea</taxon>
        <taxon>Mustelidae</taxon>
        <taxon>Taxidiinae</taxon>
        <taxon>Taxidea</taxon>
    </lineage>
</organism>
<sequence>MTNIRKTHPLAKIINNSFIDLPAPSNISTWWNFGSLLGVCLIIQILTGLFLAMHYTSDTTTAFSSVTHICRDVNYGWIIRYMHANGASMFFICLFLHVGRGLYYGSYMFPETWNIGIILLLTVMATAFMGYVLPWGQMSFWGATVITNLLSAIPYIGTNLVEWIWGGFSVDKATLTRFFAFHFILPFIILALAAIHLLFLHETGSNNPSGIPSNSDKIPFHPYYTIKDILGALLMALLLMVLVLFSPDLLGDPDNYTPANPLSTPPHIKPEWYFLFAYAILRSIPNKLGGVLALLFSILILAIIPLLHTSKQRSMMFRPLSQCMFWLLVADLLILTWIGGQPVEHPYITIGQLASILYFTILLALMPTISIIENNLLKW</sequence>
<protein>
    <recommendedName>
        <fullName>Cytochrome b</fullName>
    </recommendedName>
    <alternativeName>
        <fullName>Complex III subunit 3</fullName>
    </alternativeName>
    <alternativeName>
        <fullName>Complex III subunit III</fullName>
    </alternativeName>
    <alternativeName>
        <fullName>Cytochrome b-c1 complex subunit 3</fullName>
    </alternativeName>
    <alternativeName>
        <fullName>Ubiquinol-cytochrome-c reductase complex cytochrome b subunit</fullName>
    </alternativeName>
</protein>
<gene>
    <name type="primary">MT-CYB</name>
    <name type="synonym">COB</name>
    <name type="synonym">CYTB</name>
    <name type="synonym">MTCYB</name>
</gene>
<comment type="function">
    <text evidence="2">Component of the ubiquinol-cytochrome c reductase complex (complex III or cytochrome b-c1 complex) that is part of the mitochondrial respiratory chain. The b-c1 complex mediates electron transfer from ubiquinol to cytochrome c. Contributes to the generation of a proton gradient across the mitochondrial membrane that is then used for ATP synthesis.</text>
</comment>
<comment type="cofactor">
    <cofactor evidence="2">
        <name>heme b</name>
        <dbReference type="ChEBI" id="CHEBI:60344"/>
    </cofactor>
    <text evidence="2">Binds 2 heme b groups non-covalently.</text>
</comment>
<comment type="subunit">
    <text evidence="2">The cytochrome bc1 complex contains 11 subunits: 3 respiratory subunits (MT-CYB, CYC1 and UQCRFS1), 2 core proteins (UQCRC1 and UQCRC2) and 6 low-molecular weight proteins (UQCRH/QCR6, UQCRB/QCR7, UQCRQ/QCR8, UQCR10/QCR9, UQCR11/QCR10 and a cleavage product of UQCRFS1). This cytochrome bc1 complex then forms a dimer.</text>
</comment>
<comment type="subcellular location">
    <subcellularLocation>
        <location evidence="2">Mitochondrion inner membrane</location>
        <topology evidence="2">Multi-pass membrane protein</topology>
    </subcellularLocation>
</comment>
<comment type="miscellaneous">
    <text evidence="1">Heme 1 (or BL or b562) is low-potential and absorbs at about 562 nm, and heme 2 (or BH or b566) is high-potential and absorbs at about 566 nm.</text>
</comment>
<comment type="similarity">
    <text evidence="3 4">Belongs to the cytochrome b family.</text>
</comment>
<comment type="caution">
    <text evidence="2">The full-length protein contains only eight transmembrane helices, not nine as predicted by bioinformatics tools.</text>
</comment>
<evidence type="ECO:0000250" key="1"/>
<evidence type="ECO:0000250" key="2">
    <source>
        <dbReference type="UniProtKB" id="P00157"/>
    </source>
</evidence>
<evidence type="ECO:0000255" key="3">
    <source>
        <dbReference type="PROSITE-ProRule" id="PRU00967"/>
    </source>
</evidence>
<evidence type="ECO:0000255" key="4">
    <source>
        <dbReference type="PROSITE-ProRule" id="PRU00968"/>
    </source>
</evidence>
<accession>O78937</accession>
<feature type="chain" id="PRO_0000061647" description="Cytochrome b">
    <location>
        <begin position="1"/>
        <end position="379"/>
    </location>
</feature>
<feature type="transmembrane region" description="Helical" evidence="2">
    <location>
        <begin position="33"/>
        <end position="53"/>
    </location>
</feature>
<feature type="transmembrane region" description="Helical" evidence="2">
    <location>
        <begin position="77"/>
        <end position="98"/>
    </location>
</feature>
<feature type="transmembrane region" description="Helical" evidence="2">
    <location>
        <begin position="113"/>
        <end position="133"/>
    </location>
</feature>
<feature type="transmembrane region" description="Helical" evidence="2">
    <location>
        <begin position="178"/>
        <end position="198"/>
    </location>
</feature>
<feature type="transmembrane region" description="Helical" evidence="2">
    <location>
        <begin position="226"/>
        <end position="246"/>
    </location>
</feature>
<feature type="transmembrane region" description="Helical" evidence="2">
    <location>
        <begin position="288"/>
        <end position="308"/>
    </location>
</feature>
<feature type="transmembrane region" description="Helical" evidence="2">
    <location>
        <begin position="320"/>
        <end position="340"/>
    </location>
</feature>
<feature type="transmembrane region" description="Helical" evidence="2">
    <location>
        <begin position="347"/>
        <end position="367"/>
    </location>
</feature>
<feature type="binding site" description="axial binding residue" evidence="2">
    <location>
        <position position="83"/>
    </location>
    <ligand>
        <name>heme b</name>
        <dbReference type="ChEBI" id="CHEBI:60344"/>
        <label>b562</label>
    </ligand>
    <ligandPart>
        <name>Fe</name>
        <dbReference type="ChEBI" id="CHEBI:18248"/>
    </ligandPart>
</feature>
<feature type="binding site" description="axial binding residue" evidence="2">
    <location>
        <position position="97"/>
    </location>
    <ligand>
        <name>heme b</name>
        <dbReference type="ChEBI" id="CHEBI:60344"/>
        <label>b566</label>
    </ligand>
    <ligandPart>
        <name>Fe</name>
        <dbReference type="ChEBI" id="CHEBI:18248"/>
    </ligandPart>
</feature>
<feature type="binding site" description="axial binding residue" evidence="2">
    <location>
        <position position="182"/>
    </location>
    <ligand>
        <name>heme b</name>
        <dbReference type="ChEBI" id="CHEBI:60344"/>
        <label>b562</label>
    </ligand>
    <ligandPart>
        <name>Fe</name>
        <dbReference type="ChEBI" id="CHEBI:18248"/>
    </ligandPart>
</feature>
<feature type="binding site" description="axial binding residue" evidence="2">
    <location>
        <position position="196"/>
    </location>
    <ligand>
        <name>heme b</name>
        <dbReference type="ChEBI" id="CHEBI:60344"/>
        <label>b566</label>
    </ligand>
    <ligandPart>
        <name>Fe</name>
        <dbReference type="ChEBI" id="CHEBI:18248"/>
    </ligandPart>
</feature>
<feature type="binding site" evidence="2">
    <location>
        <position position="201"/>
    </location>
    <ligand>
        <name>a ubiquinone</name>
        <dbReference type="ChEBI" id="CHEBI:16389"/>
    </ligand>
</feature>
<keyword id="KW-0249">Electron transport</keyword>
<keyword id="KW-0349">Heme</keyword>
<keyword id="KW-0408">Iron</keyword>
<keyword id="KW-0472">Membrane</keyword>
<keyword id="KW-0479">Metal-binding</keyword>
<keyword id="KW-0496">Mitochondrion</keyword>
<keyword id="KW-0999">Mitochondrion inner membrane</keyword>
<keyword id="KW-0679">Respiratory chain</keyword>
<keyword id="KW-0812">Transmembrane</keyword>
<keyword id="KW-1133">Transmembrane helix</keyword>
<keyword id="KW-0813">Transport</keyword>
<keyword id="KW-0830">Ubiquinone</keyword>
<proteinExistence type="inferred from homology"/>
<geneLocation type="mitochondrion"/>
<reference key="1">
    <citation type="journal article" date="1998" name="J. Zool. (Lond.)">
        <title>Phylogenetic relationships of otters (Carnivora: Mustelidae) based on mitochondrial cytochrome b sequences.</title>
        <authorList>
            <person name="Koepfli K.-P."/>
            <person name="Wayne R.K."/>
        </authorList>
    </citation>
    <scope>NUCLEOTIDE SEQUENCE [GENOMIC DNA]</scope>
</reference>
<name>CYB_TAXTA</name>